<gene>
    <name type="primary">mybF</name>
    <name type="ORF">DDB_G0278317</name>
</gene>
<name>MYBF_DICDI</name>
<comment type="subcellular location">
    <subcellularLocation>
        <location evidence="1">Nucleus</location>
    </subcellularLocation>
</comment>
<dbReference type="EMBL" id="AAFI02000023">
    <property type="protein sequence ID" value="EAL68331.1"/>
    <property type="molecule type" value="Genomic_DNA"/>
</dbReference>
<dbReference type="RefSeq" id="XP_642285.1">
    <property type="nucleotide sequence ID" value="XM_637193.1"/>
</dbReference>
<dbReference type="SMR" id="Q54YB7"/>
<dbReference type="FunCoup" id="Q54YB7">
    <property type="interactions" value="37"/>
</dbReference>
<dbReference type="STRING" id="44689.Q54YB7"/>
<dbReference type="PaxDb" id="44689-DDB0220618"/>
<dbReference type="EnsemblProtists" id="EAL68331">
    <property type="protein sequence ID" value="EAL68331"/>
    <property type="gene ID" value="DDB_G0278317"/>
</dbReference>
<dbReference type="GeneID" id="8621492"/>
<dbReference type="KEGG" id="ddi:DDB_G0278317"/>
<dbReference type="dictyBase" id="DDB_G0278317">
    <property type="gene designation" value="mybF"/>
</dbReference>
<dbReference type="VEuPathDB" id="AmoebaDB:DDB_G0278317"/>
<dbReference type="HOGENOM" id="CLU_483518_0_0_1"/>
<dbReference type="InParanoid" id="Q54YB7"/>
<dbReference type="OMA" id="CEHNDLE"/>
<dbReference type="PRO" id="PR:Q54YB7"/>
<dbReference type="Proteomes" id="UP000002195">
    <property type="component" value="Chromosome 3"/>
</dbReference>
<dbReference type="GO" id="GO:0016592">
    <property type="term" value="C:mediator complex"/>
    <property type="evidence" value="ECO:0000318"/>
    <property type="project" value="GO_Central"/>
</dbReference>
<dbReference type="GO" id="GO:0003677">
    <property type="term" value="F:DNA binding"/>
    <property type="evidence" value="ECO:0000250"/>
    <property type="project" value="dictyBase"/>
</dbReference>
<dbReference type="GO" id="GO:0003713">
    <property type="term" value="F:transcription coactivator activity"/>
    <property type="evidence" value="ECO:0000318"/>
    <property type="project" value="GO_Central"/>
</dbReference>
<dbReference type="GO" id="GO:0045944">
    <property type="term" value="P:positive regulation of transcription by RNA polymerase II"/>
    <property type="evidence" value="ECO:0000318"/>
    <property type="project" value="GO_Central"/>
</dbReference>
<dbReference type="CDD" id="cd00167">
    <property type="entry name" value="SANT"/>
    <property type="match status" value="1"/>
</dbReference>
<dbReference type="FunFam" id="1.10.10.60:FF:000413">
    <property type="entry name" value="Myb-like DNA-binding domain containing protein"/>
    <property type="match status" value="1"/>
</dbReference>
<dbReference type="Gene3D" id="1.10.10.60">
    <property type="entry name" value="Homeodomain-like"/>
    <property type="match status" value="1"/>
</dbReference>
<dbReference type="InterPro" id="IPR009057">
    <property type="entry name" value="Homeodomain-like_sf"/>
</dbReference>
<dbReference type="InterPro" id="IPR052145">
    <property type="entry name" value="Mediator/Homeobox_domain"/>
</dbReference>
<dbReference type="InterPro" id="IPR017930">
    <property type="entry name" value="Myb_dom"/>
</dbReference>
<dbReference type="InterPro" id="IPR001005">
    <property type="entry name" value="SANT/Myb"/>
</dbReference>
<dbReference type="InterPro" id="IPR017884">
    <property type="entry name" value="SANT_dom"/>
</dbReference>
<dbReference type="PANTHER" id="PTHR24330">
    <property type="entry name" value="HOMEOBOX PROTEIN BARH-LIKE"/>
    <property type="match status" value="1"/>
</dbReference>
<dbReference type="PANTHER" id="PTHR24330:SF19">
    <property type="entry name" value="MEDIATOR OF RNA POLYMERASE II TRANSCRIPTION SUBUNIT 29"/>
    <property type="match status" value="1"/>
</dbReference>
<dbReference type="Pfam" id="PF00249">
    <property type="entry name" value="Myb_DNA-binding"/>
    <property type="match status" value="1"/>
</dbReference>
<dbReference type="SMART" id="SM00717">
    <property type="entry name" value="SANT"/>
    <property type="match status" value="1"/>
</dbReference>
<dbReference type="SUPFAM" id="SSF46689">
    <property type="entry name" value="Homeodomain-like"/>
    <property type="match status" value="1"/>
</dbReference>
<dbReference type="PROSITE" id="PS51293">
    <property type="entry name" value="SANT"/>
    <property type="match status" value="1"/>
</dbReference>
<reference key="1">
    <citation type="journal article" date="2005" name="Nature">
        <title>The genome of the social amoeba Dictyostelium discoideum.</title>
        <authorList>
            <person name="Eichinger L."/>
            <person name="Pachebat J.A."/>
            <person name="Gloeckner G."/>
            <person name="Rajandream M.A."/>
            <person name="Sucgang R."/>
            <person name="Berriman M."/>
            <person name="Song J."/>
            <person name="Olsen R."/>
            <person name="Szafranski K."/>
            <person name="Xu Q."/>
            <person name="Tunggal B."/>
            <person name="Kummerfeld S."/>
            <person name="Madera M."/>
            <person name="Konfortov B.A."/>
            <person name="Rivero F."/>
            <person name="Bankier A.T."/>
            <person name="Lehmann R."/>
            <person name="Hamlin N."/>
            <person name="Davies R."/>
            <person name="Gaudet P."/>
            <person name="Fey P."/>
            <person name="Pilcher K."/>
            <person name="Chen G."/>
            <person name="Saunders D."/>
            <person name="Sodergren E.J."/>
            <person name="Davis P."/>
            <person name="Kerhornou A."/>
            <person name="Nie X."/>
            <person name="Hall N."/>
            <person name="Anjard C."/>
            <person name="Hemphill L."/>
            <person name="Bason N."/>
            <person name="Farbrother P."/>
            <person name="Desany B."/>
            <person name="Just E."/>
            <person name="Morio T."/>
            <person name="Rost R."/>
            <person name="Churcher C.M."/>
            <person name="Cooper J."/>
            <person name="Haydock S."/>
            <person name="van Driessche N."/>
            <person name="Cronin A."/>
            <person name="Goodhead I."/>
            <person name="Muzny D.M."/>
            <person name="Mourier T."/>
            <person name="Pain A."/>
            <person name="Lu M."/>
            <person name="Harper D."/>
            <person name="Lindsay R."/>
            <person name="Hauser H."/>
            <person name="James K.D."/>
            <person name="Quiles M."/>
            <person name="Madan Babu M."/>
            <person name="Saito T."/>
            <person name="Buchrieser C."/>
            <person name="Wardroper A."/>
            <person name="Felder M."/>
            <person name="Thangavelu M."/>
            <person name="Johnson D."/>
            <person name="Knights A."/>
            <person name="Loulseged H."/>
            <person name="Mungall K.L."/>
            <person name="Oliver K."/>
            <person name="Price C."/>
            <person name="Quail M.A."/>
            <person name="Urushihara H."/>
            <person name="Hernandez J."/>
            <person name="Rabbinowitsch E."/>
            <person name="Steffen D."/>
            <person name="Sanders M."/>
            <person name="Ma J."/>
            <person name="Kohara Y."/>
            <person name="Sharp S."/>
            <person name="Simmonds M.N."/>
            <person name="Spiegler S."/>
            <person name="Tivey A."/>
            <person name="Sugano S."/>
            <person name="White B."/>
            <person name="Walker D."/>
            <person name="Woodward J.R."/>
            <person name="Winckler T."/>
            <person name="Tanaka Y."/>
            <person name="Shaulsky G."/>
            <person name="Schleicher M."/>
            <person name="Weinstock G.M."/>
            <person name="Rosenthal A."/>
            <person name="Cox E.C."/>
            <person name="Chisholm R.L."/>
            <person name="Gibbs R.A."/>
            <person name="Loomis W.F."/>
            <person name="Platzer M."/>
            <person name="Kay R.R."/>
            <person name="Williams J.G."/>
            <person name="Dear P.H."/>
            <person name="Noegel A.A."/>
            <person name="Barrell B.G."/>
            <person name="Kuspa A."/>
        </authorList>
    </citation>
    <scope>NUCLEOTIDE SEQUENCE [LARGE SCALE GENOMIC DNA]</scope>
    <source>
        <strain>AX4</strain>
    </source>
</reference>
<organism>
    <name type="scientific">Dictyostelium discoideum</name>
    <name type="common">Social amoeba</name>
    <dbReference type="NCBI Taxonomy" id="44689"/>
    <lineage>
        <taxon>Eukaryota</taxon>
        <taxon>Amoebozoa</taxon>
        <taxon>Evosea</taxon>
        <taxon>Eumycetozoa</taxon>
        <taxon>Dictyostelia</taxon>
        <taxon>Dictyosteliales</taxon>
        <taxon>Dictyosteliaceae</taxon>
        <taxon>Dictyostelium</taxon>
    </lineage>
</organism>
<protein>
    <recommendedName>
        <fullName>Myb-like protein F</fullName>
    </recommendedName>
</protein>
<proteinExistence type="inferred from homology"/>
<sequence>MKSMQYHPPTTTLVSEFNKEKYNNSNHYNDNNDNNNNNNNNNNDNNNNDNNNNNNNNNNSIINNESDNESNGTSNNYNDEANDNHHHHQDDEHHGNGNDNDNENYNNQNVNHEKLASIKNKNYNNNESDNESIEEINSNHNNDNNNNTNNNDNSSNNNNNNNNSNNNNNNNSKEINEDKENYNNCDQHHHNHNNNNNNKYNGGSSYNYNSKNCKEYINNLENLLKLSNKENKELYEKIISLGSILNEKKTLLSKYRNVLIDYLEDVHIYDENGNANPNYDNYNNTQQKSIKDFDVGKDLVKSNLNLQFHNYNNKDYNKEYNNNNNGNNNKDYNNNKEYNNINNNNISSNNNNNNNNNNNNNSSNKEYKEKEYKEKEYKEKEFKESKDSSLKRKSSSDDDGDDSGRDTKKYKPGRTVWTLEEEELYKEVFNHYGKNWKKIKTHFPDKSKSQVTSHGQYLIKINKLQDLQKVKSPPTLNITLNDIIEQLKQQQQQQQQQQQQQQQQQQQQQQQQQNNIVINNENTNDNNNHNNNNYNDNNNNSNNNNNFNNSNNNNTNKFIDEDDD</sequence>
<accession>Q54YB7</accession>
<evidence type="ECO:0000255" key="1">
    <source>
        <dbReference type="PROSITE-ProRule" id="PRU00624"/>
    </source>
</evidence>
<evidence type="ECO:0000256" key="2">
    <source>
        <dbReference type="SAM" id="MobiDB-lite"/>
    </source>
</evidence>
<feature type="chain" id="PRO_0000329381" description="Myb-like protein F">
    <location>
        <begin position="1"/>
        <end position="564"/>
    </location>
</feature>
<feature type="domain" description="SANT" evidence="1">
    <location>
        <begin position="412"/>
        <end position="464"/>
    </location>
</feature>
<feature type="region of interest" description="Disordered" evidence="2">
    <location>
        <begin position="22"/>
        <end position="107"/>
    </location>
</feature>
<feature type="region of interest" description="Disordered" evidence="2">
    <location>
        <begin position="122"/>
        <end position="203"/>
    </location>
</feature>
<feature type="region of interest" description="Disordered" evidence="2">
    <location>
        <begin position="310"/>
        <end position="410"/>
    </location>
</feature>
<feature type="region of interest" description="Disordered" evidence="2">
    <location>
        <begin position="519"/>
        <end position="564"/>
    </location>
</feature>
<feature type="compositionally biased region" description="Low complexity" evidence="2">
    <location>
        <begin position="23"/>
        <end position="79"/>
    </location>
</feature>
<feature type="compositionally biased region" description="Basic and acidic residues" evidence="2">
    <location>
        <begin position="82"/>
        <end position="96"/>
    </location>
</feature>
<feature type="compositionally biased region" description="Low complexity" evidence="2">
    <location>
        <begin position="97"/>
        <end position="107"/>
    </location>
</feature>
<feature type="compositionally biased region" description="Low complexity" evidence="2">
    <location>
        <begin position="135"/>
        <end position="173"/>
    </location>
</feature>
<feature type="compositionally biased region" description="Low complexity" evidence="2">
    <location>
        <begin position="193"/>
        <end position="203"/>
    </location>
</feature>
<feature type="compositionally biased region" description="Low complexity" evidence="2">
    <location>
        <begin position="310"/>
        <end position="364"/>
    </location>
</feature>
<feature type="compositionally biased region" description="Basic and acidic residues" evidence="2">
    <location>
        <begin position="365"/>
        <end position="409"/>
    </location>
</feature>
<feature type="compositionally biased region" description="Low complexity" evidence="2">
    <location>
        <begin position="519"/>
        <end position="556"/>
    </location>
</feature>
<keyword id="KW-0539">Nucleus</keyword>
<keyword id="KW-1185">Reference proteome</keyword>